<keyword id="KW-1185">Reference proteome</keyword>
<keyword id="KW-0687">Ribonucleoprotein</keyword>
<keyword id="KW-0689">Ribosomal protein</keyword>
<proteinExistence type="inferred from homology"/>
<organism>
    <name type="scientific">Geotalea daltonii (strain DSM 22248 / JCM 15807 / FRC-32)</name>
    <name type="common">Geobacter daltonii</name>
    <dbReference type="NCBI Taxonomy" id="316067"/>
    <lineage>
        <taxon>Bacteria</taxon>
        <taxon>Pseudomonadati</taxon>
        <taxon>Thermodesulfobacteriota</taxon>
        <taxon>Desulfuromonadia</taxon>
        <taxon>Geobacterales</taxon>
        <taxon>Geobacteraceae</taxon>
        <taxon>Geotalea</taxon>
    </lineage>
</organism>
<feature type="chain" id="PRO_1000184145" description="Large ribosomal subunit protein uL30">
    <location>
        <begin position="1"/>
        <end position="59"/>
    </location>
</feature>
<name>RL30_GEODF</name>
<gene>
    <name evidence="1" type="primary">rpmD</name>
    <name type="ordered locus">Geob_3607</name>
</gene>
<protein>
    <recommendedName>
        <fullName evidence="1">Large ribosomal subunit protein uL30</fullName>
    </recommendedName>
    <alternativeName>
        <fullName evidence="2">50S ribosomal protein L30</fullName>
    </alternativeName>
</protein>
<accession>B9M6G0</accession>
<evidence type="ECO:0000255" key="1">
    <source>
        <dbReference type="HAMAP-Rule" id="MF_01371"/>
    </source>
</evidence>
<evidence type="ECO:0000305" key="2"/>
<sequence>MSAEVKVTLVRSHIGKSTSVKAVLNGLGLTKRQKTVTLKDSPEVRGMINKVSHLLKVDE</sequence>
<dbReference type="EMBL" id="CP001390">
    <property type="protein sequence ID" value="ACM21948.1"/>
    <property type="molecule type" value="Genomic_DNA"/>
</dbReference>
<dbReference type="RefSeq" id="WP_012648676.1">
    <property type="nucleotide sequence ID" value="NC_011979.1"/>
</dbReference>
<dbReference type="SMR" id="B9M6G0"/>
<dbReference type="STRING" id="316067.Geob_3607"/>
<dbReference type="KEGG" id="geo:Geob_3607"/>
<dbReference type="eggNOG" id="COG1841">
    <property type="taxonomic scope" value="Bacteria"/>
</dbReference>
<dbReference type="HOGENOM" id="CLU_131047_1_4_7"/>
<dbReference type="OrthoDB" id="9812790at2"/>
<dbReference type="Proteomes" id="UP000007721">
    <property type="component" value="Chromosome"/>
</dbReference>
<dbReference type="GO" id="GO:0022625">
    <property type="term" value="C:cytosolic large ribosomal subunit"/>
    <property type="evidence" value="ECO:0007669"/>
    <property type="project" value="TreeGrafter"/>
</dbReference>
<dbReference type="GO" id="GO:0003735">
    <property type="term" value="F:structural constituent of ribosome"/>
    <property type="evidence" value="ECO:0007669"/>
    <property type="project" value="InterPro"/>
</dbReference>
<dbReference type="GO" id="GO:0006412">
    <property type="term" value="P:translation"/>
    <property type="evidence" value="ECO:0007669"/>
    <property type="project" value="InterPro"/>
</dbReference>
<dbReference type="CDD" id="cd01658">
    <property type="entry name" value="Ribosomal_L30"/>
    <property type="match status" value="1"/>
</dbReference>
<dbReference type="Gene3D" id="3.30.1390.20">
    <property type="entry name" value="Ribosomal protein L30, ferredoxin-like fold domain"/>
    <property type="match status" value="1"/>
</dbReference>
<dbReference type="HAMAP" id="MF_01371_B">
    <property type="entry name" value="Ribosomal_uL30_B"/>
    <property type="match status" value="1"/>
</dbReference>
<dbReference type="InterPro" id="IPR036919">
    <property type="entry name" value="Ribo_uL30_ferredoxin-like_sf"/>
</dbReference>
<dbReference type="InterPro" id="IPR005996">
    <property type="entry name" value="Ribosomal_uL30_bac-type"/>
</dbReference>
<dbReference type="InterPro" id="IPR016082">
    <property type="entry name" value="Ribosomal_uL30_ferredoxin-like"/>
</dbReference>
<dbReference type="NCBIfam" id="TIGR01308">
    <property type="entry name" value="rpmD_bact"/>
    <property type="match status" value="1"/>
</dbReference>
<dbReference type="PANTHER" id="PTHR15892:SF2">
    <property type="entry name" value="LARGE RIBOSOMAL SUBUNIT PROTEIN UL30M"/>
    <property type="match status" value="1"/>
</dbReference>
<dbReference type="PANTHER" id="PTHR15892">
    <property type="entry name" value="MITOCHONDRIAL RIBOSOMAL PROTEIN L30"/>
    <property type="match status" value="1"/>
</dbReference>
<dbReference type="Pfam" id="PF00327">
    <property type="entry name" value="Ribosomal_L30"/>
    <property type="match status" value="1"/>
</dbReference>
<dbReference type="PIRSF" id="PIRSF002211">
    <property type="entry name" value="Ribosomal_L30_bac-type"/>
    <property type="match status" value="1"/>
</dbReference>
<dbReference type="SUPFAM" id="SSF55129">
    <property type="entry name" value="Ribosomal protein L30p/L7e"/>
    <property type="match status" value="1"/>
</dbReference>
<comment type="subunit">
    <text evidence="1">Part of the 50S ribosomal subunit.</text>
</comment>
<comment type="similarity">
    <text evidence="1">Belongs to the universal ribosomal protein uL30 family.</text>
</comment>
<reference key="1">
    <citation type="submission" date="2009-01" db="EMBL/GenBank/DDBJ databases">
        <title>Complete sequence of Geobacter sp. FRC-32.</title>
        <authorList>
            <consortium name="US DOE Joint Genome Institute"/>
            <person name="Lucas S."/>
            <person name="Copeland A."/>
            <person name="Lapidus A."/>
            <person name="Glavina del Rio T."/>
            <person name="Dalin E."/>
            <person name="Tice H."/>
            <person name="Bruce D."/>
            <person name="Goodwin L."/>
            <person name="Pitluck S."/>
            <person name="Saunders E."/>
            <person name="Brettin T."/>
            <person name="Detter J.C."/>
            <person name="Han C."/>
            <person name="Larimer F."/>
            <person name="Land M."/>
            <person name="Hauser L."/>
            <person name="Kyrpides N."/>
            <person name="Ovchinnikova G."/>
            <person name="Kostka J."/>
            <person name="Richardson P."/>
        </authorList>
    </citation>
    <scope>NUCLEOTIDE SEQUENCE [LARGE SCALE GENOMIC DNA]</scope>
    <source>
        <strain>DSM 22248 / JCM 15807 / FRC-32</strain>
    </source>
</reference>